<reference key="1">
    <citation type="journal article" date="1995" name="Science">
        <title>The minimal gene complement of Mycoplasma genitalium.</title>
        <authorList>
            <person name="Fraser C.M."/>
            <person name="Gocayne J.D."/>
            <person name="White O."/>
            <person name="Adams M.D."/>
            <person name="Clayton R.A."/>
            <person name="Fleischmann R.D."/>
            <person name="Bult C.J."/>
            <person name="Kerlavage A.R."/>
            <person name="Sutton G.G."/>
            <person name="Kelley J.M."/>
            <person name="Fritchman J.L."/>
            <person name="Weidman J.F."/>
            <person name="Small K.V."/>
            <person name="Sandusky M."/>
            <person name="Fuhrmann J.L."/>
            <person name="Nguyen D.T."/>
            <person name="Utterback T.R."/>
            <person name="Saudek D.M."/>
            <person name="Phillips C.A."/>
            <person name="Merrick J.M."/>
            <person name="Tomb J.-F."/>
            <person name="Dougherty B.A."/>
            <person name="Bott K.F."/>
            <person name="Hu P.-C."/>
            <person name="Lucier T.S."/>
            <person name="Peterson S.N."/>
            <person name="Smith H.O."/>
            <person name="Hutchison C.A. III"/>
            <person name="Venter J.C."/>
        </authorList>
    </citation>
    <scope>NUCLEOTIDE SEQUENCE [LARGE SCALE GENOMIC DNA]</scope>
    <source>
        <strain>ATCC 33530 / DSM 19775 / NCTC 10195 / G37</strain>
    </source>
</reference>
<proteinExistence type="inferred from homology"/>
<name>GATA_MYCGE</name>
<feature type="chain" id="PRO_0000105178" description="Glutamyl-tRNA(Gln) amidotransferase subunit A">
    <location>
        <begin position="1"/>
        <end position="477"/>
    </location>
</feature>
<feature type="active site" description="Charge relay system" evidence="1">
    <location>
        <position position="68"/>
    </location>
</feature>
<feature type="active site" description="Charge relay system" evidence="1">
    <location>
        <position position="143"/>
    </location>
</feature>
<feature type="active site" description="Acyl-ester intermediate" evidence="1">
    <location>
        <position position="167"/>
    </location>
</feature>
<comment type="function">
    <text evidence="1">Allows the formation of correctly charged Gln-tRNA(Gln) through the transamidation of misacylated Glu-tRNA(Gln) in organisms which lack glutaminyl-tRNA synthetase. The reaction takes place in the presence of glutamine and ATP through an activated gamma-phospho-Glu-tRNA(Gln) (By similarity).</text>
</comment>
<comment type="catalytic activity">
    <reaction>
        <text>L-glutamyl-tRNA(Gln) + L-glutamine + ATP + H2O = L-glutaminyl-tRNA(Gln) + L-glutamate + ADP + phosphate + H(+)</text>
        <dbReference type="Rhea" id="RHEA:17521"/>
        <dbReference type="Rhea" id="RHEA-COMP:9681"/>
        <dbReference type="Rhea" id="RHEA-COMP:9684"/>
        <dbReference type="ChEBI" id="CHEBI:15377"/>
        <dbReference type="ChEBI" id="CHEBI:15378"/>
        <dbReference type="ChEBI" id="CHEBI:29985"/>
        <dbReference type="ChEBI" id="CHEBI:30616"/>
        <dbReference type="ChEBI" id="CHEBI:43474"/>
        <dbReference type="ChEBI" id="CHEBI:58359"/>
        <dbReference type="ChEBI" id="CHEBI:78520"/>
        <dbReference type="ChEBI" id="CHEBI:78521"/>
        <dbReference type="ChEBI" id="CHEBI:456216"/>
        <dbReference type="EC" id="6.3.5.7"/>
    </reaction>
</comment>
<comment type="subunit">
    <text evidence="1">Heterotrimer of A, B and C subunits.</text>
</comment>
<comment type="similarity">
    <text evidence="2">Belongs to the amidase family. GatA subfamily.</text>
</comment>
<protein>
    <recommendedName>
        <fullName>Glutamyl-tRNA(Gln) amidotransferase subunit A</fullName>
        <shortName>Glu-ADT subunit A</shortName>
        <ecNumber>6.3.5.7</ecNumber>
    </recommendedName>
</protein>
<gene>
    <name type="primary">gatA</name>
    <name type="ordered locus">MG099</name>
</gene>
<evidence type="ECO:0000250" key="1"/>
<evidence type="ECO:0000305" key="2"/>
<organism>
    <name type="scientific">Mycoplasma genitalium (strain ATCC 33530 / DSM 19775 / NCTC 10195 / G37)</name>
    <name type="common">Mycoplasmoides genitalium</name>
    <dbReference type="NCBI Taxonomy" id="243273"/>
    <lineage>
        <taxon>Bacteria</taxon>
        <taxon>Bacillati</taxon>
        <taxon>Mycoplasmatota</taxon>
        <taxon>Mycoplasmoidales</taxon>
        <taxon>Mycoplasmoidaceae</taxon>
        <taxon>Mycoplasmoides</taxon>
    </lineage>
</organism>
<dbReference type="EC" id="6.3.5.7"/>
<dbReference type="EMBL" id="L43967">
    <property type="protein sequence ID" value="AAC71317.1"/>
    <property type="molecule type" value="Genomic_DNA"/>
</dbReference>
<dbReference type="PIR" id="I64210">
    <property type="entry name" value="I64210"/>
</dbReference>
<dbReference type="RefSeq" id="WP_010869331.1">
    <property type="nucleotide sequence ID" value="NC_000908.2"/>
</dbReference>
<dbReference type="SMR" id="P47345"/>
<dbReference type="FunCoup" id="P47345">
    <property type="interactions" value="198"/>
</dbReference>
<dbReference type="STRING" id="243273.MG_099"/>
<dbReference type="GeneID" id="88282222"/>
<dbReference type="KEGG" id="mge:MG_099"/>
<dbReference type="eggNOG" id="COG0154">
    <property type="taxonomic scope" value="Bacteria"/>
</dbReference>
<dbReference type="HOGENOM" id="CLU_009600_7_6_14"/>
<dbReference type="InParanoid" id="P47345"/>
<dbReference type="OrthoDB" id="9811471at2"/>
<dbReference type="BioCyc" id="MGEN243273:G1GJ2-111-MONOMER"/>
<dbReference type="Proteomes" id="UP000000807">
    <property type="component" value="Chromosome"/>
</dbReference>
<dbReference type="GO" id="GO:0030956">
    <property type="term" value="C:glutamyl-tRNA(Gln) amidotransferase complex"/>
    <property type="evidence" value="ECO:0007669"/>
    <property type="project" value="InterPro"/>
</dbReference>
<dbReference type="GO" id="GO:0005524">
    <property type="term" value="F:ATP binding"/>
    <property type="evidence" value="ECO:0007669"/>
    <property type="project" value="UniProtKB-KW"/>
</dbReference>
<dbReference type="GO" id="GO:0050567">
    <property type="term" value="F:glutaminyl-tRNA synthase (glutamine-hydrolyzing) activity"/>
    <property type="evidence" value="ECO:0007669"/>
    <property type="project" value="UniProtKB-UniRule"/>
</dbReference>
<dbReference type="GO" id="GO:0006412">
    <property type="term" value="P:translation"/>
    <property type="evidence" value="ECO:0007669"/>
    <property type="project" value="UniProtKB-UniRule"/>
</dbReference>
<dbReference type="Gene3D" id="3.90.1300.10">
    <property type="entry name" value="Amidase signature (AS) domain"/>
    <property type="match status" value="1"/>
</dbReference>
<dbReference type="HAMAP" id="MF_00120">
    <property type="entry name" value="GatA"/>
    <property type="match status" value="1"/>
</dbReference>
<dbReference type="InterPro" id="IPR000120">
    <property type="entry name" value="Amidase"/>
</dbReference>
<dbReference type="InterPro" id="IPR020556">
    <property type="entry name" value="Amidase_CS"/>
</dbReference>
<dbReference type="InterPro" id="IPR023631">
    <property type="entry name" value="Amidase_dom"/>
</dbReference>
<dbReference type="InterPro" id="IPR036928">
    <property type="entry name" value="AS_sf"/>
</dbReference>
<dbReference type="InterPro" id="IPR004412">
    <property type="entry name" value="GatA"/>
</dbReference>
<dbReference type="NCBIfam" id="TIGR00132">
    <property type="entry name" value="gatA"/>
    <property type="match status" value="1"/>
</dbReference>
<dbReference type="PANTHER" id="PTHR11895:SF151">
    <property type="entry name" value="GLUTAMYL-TRNA(GLN) AMIDOTRANSFERASE SUBUNIT A"/>
    <property type="match status" value="1"/>
</dbReference>
<dbReference type="PANTHER" id="PTHR11895">
    <property type="entry name" value="TRANSAMIDASE"/>
    <property type="match status" value="1"/>
</dbReference>
<dbReference type="Pfam" id="PF01425">
    <property type="entry name" value="Amidase"/>
    <property type="match status" value="1"/>
</dbReference>
<dbReference type="SUPFAM" id="SSF75304">
    <property type="entry name" value="Amidase signature (AS) enzymes"/>
    <property type="match status" value="1"/>
</dbReference>
<dbReference type="PROSITE" id="PS00571">
    <property type="entry name" value="AMIDASES"/>
    <property type="match status" value="1"/>
</dbReference>
<accession>P47345</accession>
<keyword id="KW-0067">ATP-binding</keyword>
<keyword id="KW-0436">Ligase</keyword>
<keyword id="KW-0547">Nucleotide-binding</keyword>
<keyword id="KW-0648">Protein biosynthesis</keyword>
<keyword id="KW-1185">Reference proteome</keyword>
<sequence length="477" mass="53408">MRSNILSLRAILDKKPSAINDVLTSINAKIELNKSSNFLLKNTVEIYSKKINKSDEKILLNNIPYVLKDNIATKDIVTTGGSLFLKNYLPPFSATVFELLEMNGALLVGKANMDEFGLGGTGSYSAFGVVHHPENSSLIAGGSSSGSAYAVAKDIVPFSIATDTGDSIRRPASICNVVGFKPTYGLISRNGVFPYAPSMDHVGIFAKFVSDIAIVSDVVIKHDKTDFSSQKSPDENQFFNELAIPFTRSIRFGYLKPLEKLFNKHLQKKWNNLKKTLEQKNYQLIPLDFDVELLKVIDSIYKIISYSEAVSCYSNLTGIVFGQKVFEPNSPSNFDQTITRNRDQFLGKQLKRRFVIGAFATDEKNFEKYFEKAQKIRRVLVDNFLNLFSDVDFVLSPSASCFASTIEDIQANKPYTNIIDDFLQLANFAGSPSITIPWLVQTKDQTIGLSISANCFEDKKLLQIAYWFEQLFDLNHD</sequence>